<sequence>MKNLLGSTIKDLENVALDYGQAGFRGRQIYNWIYNYRNKKKNIDQIEVLPLDFRKRLKDDGFKVSDLSIHERNLANDGTLKLLLSTEDNESIECVGIPTEKRLTACLSSQVGCPMDCKFCATGKEGLKRSLKVSEILDQILFIENEMNRKVTNIVFMGMGEPLLNIDDLLLSIRSINEDLKISQRKITVSTVAVPKMINKLSAKSFKILGNCQFTLAVSLHAPNQKIRETIIPSAKNYEIENIIEDCKQYVRDTGRRVSFEYLMLRGVNDKIEHANELSHLLKGFQCHVNLIQYNQIDEVEFQRACLKDLQSFQSRLSHNGIAVSLRKSRGLDKNAACGQLRQNARN</sequence>
<gene>
    <name evidence="1" type="primary">rlmN</name>
    <name type="ordered locus">P9301_16721</name>
</gene>
<name>RLMN_PROM0</name>
<comment type="function">
    <text evidence="1">Specifically methylates position 2 of adenine 2503 in 23S rRNA and position 2 of adenine 37 in tRNAs.</text>
</comment>
<comment type="catalytic activity">
    <reaction evidence="1">
        <text>adenosine(2503) in 23S rRNA + 2 reduced [2Fe-2S]-[ferredoxin] + 2 S-adenosyl-L-methionine = 2-methyladenosine(2503) in 23S rRNA + 5'-deoxyadenosine + L-methionine + 2 oxidized [2Fe-2S]-[ferredoxin] + S-adenosyl-L-homocysteine</text>
        <dbReference type="Rhea" id="RHEA:42916"/>
        <dbReference type="Rhea" id="RHEA-COMP:10000"/>
        <dbReference type="Rhea" id="RHEA-COMP:10001"/>
        <dbReference type="Rhea" id="RHEA-COMP:10152"/>
        <dbReference type="Rhea" id="RHEA-COMP:10282"/>
        <dbReference type="ChEBI" id="CHEBI:17319"/>
        <dbReference type="ChEBI" id="CHEBI:33737"/>
        <dbReference type="ChEBI" id="CHEBI:33738"/>
        <dbReference type="ChEBI" id="CHEBI:57844"/>
        <dbReference type="ChEBI" id="CHEBI:57856"/>
        <dbReference type="ChEBI" id="CHEBI:59789"/>
        <dbReference type="ChEBI" id="CHEBI:74411"/>
        <dbReference type="ChEBI" id="CHEBI:74497"/>
        <dbReference type="EC" id="2.1.1.192"/>
    </reaction>
</comment>
<comment type="catalytic activity">
    <reaction evidence="1">
        <text>adenosine(37) in tRNA + 2 reduced [2Fe-2S]-[ferredoxin] + 2 S-adenosyl-L-methionine = 2-methyladenosine(37) in tRNA + 5'-deoxyadenosine + L-methionine + 2 oxidized [2Fe-2S]-[ferredoxin] + S-adenosyl-L-homocysteine</text>
        <dbReference type="Rhea" id="RHEA:43332"/>
        <dbReference type="Rhea" id="RHEA-COMP:10000"/>
        <dbReference type="Rhea" id="RHEA-COMP:10001"/>
        <dbReference type="Rhea" id="RHEA-COMP:10162"/>
        <dbReference type="Rhea" id="RHEA-COMP:10485"/>
        <dbReference type="ChEBI" id="CHEBI:17319"/>
        <dbReference type="ChEBI" id="CHEBI:33737"/>
        <dbReference type="ChEBI" id="CHEBI:33738"/>
        <dbReference type="ChEBI" id="CHEBI:57844"/>
        <dbReference type="ChEBI" id="CHEBI:57856"/>
        <dbReference type="ChEBI" id="CHEBI:59789"/>
        <dbReference type="ChEBI" id="CHEBI:74411"/>
        <dbReference type="ChEBI" id="CHEBI:74497"/>
        <dbReference type="EC" id="2.1.1.192"/>
    </reaction>
</comment>
<comment type="cofactor">
    <cofactor evidence="1">
        <name>[4Fe-4S] cluster</name>
        <dbReference type="ChEBI" id="CHEBI:49883"/>
    </cofactor>
    <text evidence="1">Binds 1 [4Fe-4S] cluster. The cluster is coordinated with 3 cysteines and an exchangeable S-adenosyl-L-methionine.</text>
</comment>
<comment type="subcellular location">
    <subcellularLocation>
        <location evidence="1">Cytoplasm</location>
    </subcellularLocation>
</comment>
<comment type="miscellaneous">
    <text evidence="1">Reaction proceeds by a ping-pong mechanism involving intermediate methylation of a conserved cysteine residue.</text>
</comment>
<comment type="similarity">
    <text evidence="1">Belongs to the radical SAM superfamily. RlmN family.</text>
</comment>
<keyword id="KW-0004">4Fe-4S</keyword>
<keyword id="KW-0963">Cytoplasm</keyword>
<keyword id="KW-1015">Disulfide bond</keyword>
<keyword id="KW-0408">Iron</keyword>
<keyword id="KW-0411">Iron-sulfur</keyword>
<keyword id="KW-0479">Metal-binding</keyword>
<keyword id="KW-0489">Methyltransferase</keyword>
<keyword id="KW-1185">Reference proteome</keyword>
<keyword id="KW-0698">rRNA processing</keyword>
<keyword id="KW-0949">S-adenosyl-L-methionine</keyword>
<keyword id="KW-0808">Transferase</keyword>
<keyword id="KW-0819">tRNA processing</keyword>
<accession>A3PEX0</accession>
<evidence type="ECO:0000255" key="1">
    <source>
        <dbReference type="HAMAP-Rule" id="MF_01849"/>
    </source>
</evidence>
<evidence type="ECO:0000255" key="2">
    <source>
        <dbReference type="PROSITE-ProRule" id="PRU01266"/>
    </source>
</evidence>
<reference key="1">
    <citation type="journal article" date="2007" name="PLoS Genet.">
        <title>Patterns and implications of gene gain and loss in the evolution of Prochlorococcus.</title>
        <authorList>
            <person name="Kettler G.C."/>
            <person name="Martiny A.C."/>
            <person name="Huang K."/>
            <person name="Zucker J."/>
            <person name="Coleman M.L."/>
            <person name="Rodrigue S."/>
            <person name="Chen F."/>
            <person name="Lapidus A."/>
            <person name="Ferriera S."/>
            <person name="Johnson J."/>
            <person name="Steglich C."/>
            <person name="Church G.M."/>
            <person name="Richardson P."/>
            <person name="Chisholm S.W."/>
        </authorList>
    </citation>
    <scope>NUCLEOTIDE SEQUENCE [LARGE SCALE GENOMIC DNA]</scope>
    <source>
        <strain>MIT 9301</strain>
    </source>
</reference>
<organism>
    <name type="scientific">Prochlorococcus marinus (strain MIT 9301)</name>
    <dbReference type="NCBI Taxonomy" id="167546"/>
    <lineage>
        <taxon>Bacteria</taxon>
        <taxon>Bacillati</taxon>
        <taxon>Cyanobacteriota</taxon>
        <taxon>Cyanophyceae</taxon>
        <taxon>Synechococcales</taxon>
        <taxon>Prochlorococcaceae</taxon>
        <taxon>Prochlorococcus</taxon>
    </lineage>
</organism>
<feature type="chain" id="PRO_0000350316" description="Probable dual-specificity RNA methyltransferase RlmN">
    <location>
        <begin position="1"/>
        <end position="347"/>
    </location>
</feature>
<feature type="domain" description="Radical SAM core" evidence="2">
    <location>
        <begin position="99"/>
        <end position="333"/>
    </location>
</feature>
<feature type="active site" description="Proton acceptor" evidence="1">
    <location>
        <position position="93"/>
    </location>
</feature>
<feature type="active site" description="S-methylcysteine intermediate" evidence="1">
    <location>
        <position position="338"/>
    </location>
</feature>
<feature type="binding site" evidence="1">
    <location>
        <position position="113"/>
    </location>
    <ligand>
        <name>[4Fe-4S] cluster</name>
        <dbReference type="ChEBI" id="CHEBI:49883"/>
        <note>4Fe-4S-S-AdoMet</note>
    </ligand>
</feature>
<feature type="binding site" evidence="1">
    <location>
        <position position="117"/>
    </location>
    <ligand>
        <name>[4Fe-4S] cluster</name>
        <dbReference type="ChEBI" id="CHEBI:49883"/>
        <note>4Fe-4S-S-AdoMet</note>
    </ligand>
</feature>
<feature type="binding site" evidence="1">
    <location>
        <position position="120"/>
    </location>
    <ligand>
        <name>[4Fe-4S] cluster</name>
        <dbReference type="ChEBI" id="CHEBI:49883"/>
        <note>4Fe-4S-S-AdoMet</note>
    </ligand>
</feature>
<feature type="binding site" evidence="1">
    <location>
        <begin position="160"/>
        <end position="161"/>
    </location>
    <ligand>
        <name>S-adenosyl-L-methionine</name>
        <dbReference type="ChEBI" id="CHEBI:59789"/>
    </ligand>
</feature>
<feature type="binding site" evidence="1">
    <location>
        <position position="190"/>
    </location>
    <ligand>
        <name>S-adenosyl-L-methionine</name>
        <dbReference type="ChEBI" id="CHEBI:59789"/>
    </ligand>
</feature>
<feature type="binding site" evidence="1">
    <location>
        <begin position="219"/>
        <end position="221"/>
    </location>
    <ligand>
        <name>S-adenosyl-L-methionine</name>
        <dbReference type="ChEBI" id="CHEBI:59789"/>
    </ligand>
</feature>
<feature type="binding site" evidence="1">
    <location>
        <position position="295"/>
    </location>
    <ligand>
        <name>S-adenosyl-L-methionine</name>
        <dbReference type="ChEBI" id="CHEBI:59789"/>
    </ligand>
</feature>
<feature type="disulfide bond" description="(transient)" evidence="1">
    <location>
        <begin position="106"/>
        <end position="338"/>
    </location>
</feature>
<proteinExistence type="inferred from homology"/>
<protein>
    <recommendedName>
        <fullName evidence="1">Probable dual-specificity RNA methyltransferase RlmN</fullName>
        <ecNumber evidence="1">2.1.1.192</ecNumber>
    </recommendedName>
    <alternativeName>
        <fullName evidence="1">23S rRNA (adenine(2503)-C(2))-methyltransferase</fullName>
    </alternativeName>
    <alternativeName>
        <fullName evidence="1">23S rRNA m2A2503 methyltransferase</fullName>
    </alternativeName>
    <alternativeName>
        <fullName evidence="1">Ribosomal RNA large subunit methyltransferase N</fullName>
    </alternativeName>
    <alternativeName>
        <fullName evidence="1">tRNA (adenine(37)-C(2))-methyltransferase</fullName>
    </alternativeName>
    <alternativeName>
        <fullName evidence="1">tRNA m2A37 methyltransferase</fullName>
    </alternativeName>
</protein>
<dbReference type="EC" id="2.1.1.192" evidence="1"/>
<dbReference type="EMBL" id="CP000576">
    <property type="protein sequence ID" value="ABO18295.1"/>
    <property type="molecule type" value="Genomic_DNA"/>
</dbReference>
<dbReference type="RefSeq" id="WP_011863592.1">
    <property type="nucleotide sequence ID" value="NC_009091.1"/>
</dbReference>
<dbReference type="SMR" id="A3PEX0"/>
<dbReference type="STRING" id="167546.P9301_16721"/>
<dbReference type="KEGG" id="pmg:P9301_16721"/>
<dbReference type="eggNOG" id="COG0820">
    <property type="taxonomic scope" value="Bacteria"/>
</dbReference>
<dbReference type="HOGENOM" id="CLU_029101_1_1_3"/>
<dbReference type="OrthoDB" id="9793973at2"/>
<dbReference type="Proteomes" id="UP000001430">
    <property type="component" value="Chromosome"/>
</dbReference>
<dbReference type="GO" id="GO:0005737">
    <property type="term" value="C:cytoplasm"/>
    <property type="evidence" value="ECO:0007669"/>
    <property type="project" value="UniProtKB-SubCell"/>
</dbReference>
<dbReference type="GO" id="GO:0051539">
    <property type="term" value="F:4 iron, 4 sulfur cluster binding"/>
    <property type="evidence" value="ECO:0007669"/>
    <property type="project" value="UniProtKB-UniRule"/>
</dbReference>
<dbReference type="GO" id="GO:0046872">
    <property type="term" value="F:metal ion binding"/>
    <property type="evidence" value="ECO:0007669"/>
    <property type="project" value="UniProtKB-KW"/>
</dbReference>
<dbReference type="GO" id="GO:0070040">
    <property type="term" value="F:rRNA (adenine(2503)-C2-)-methyltransferase activity"/>
    <property type="evidence" value="ECO:0007669"/>
    <property type="project" value="UniProtKB-UniRule"/>
</dbReference>
<dbReference type="GO" id="GO:0019843">
    <property type="term" value="F:rRNA binding"/>
    <property type="evidence" value="ECO:0007669"/>
    <property type="project" value="UniProtKB-UniRule"/>
</dbReference>
<dbReference type="GO" id="GO:0002935">
    <property type="term" value="F:tRNA (adenine(37)-C2)-methyltransferase activity"/>
    <property type="evidence" value="ECO:0007669"/>
    <property type="project" value="UniProtKB-UniRule"/>
</dbReference>
<dbReference type="GO" id="GO:0000049">
    <property type="term" value="F:tRNA binding"/>
    <property type="evidence" value="ECO:0007669"/>
    <property type="project" value="UniProtKB-UniRule"/>
</dbReference>
<dbReference type="GO" id="GO:0070475">
    <property type="term" value="P:rRNA base methylation"/>
    <property type="evidence" value="ECO:0007669"/>
    <property type="project" value="UniProtKB-UniRule"/>
</dbReference>
<dbReference type="GO" id="GO:0030488">
    <property type="term" value="P:tRNA methylation"/>
    <property type="evidence" value="ECO:0007669"/>
    <property type="project" value="UniProtKB-UniRule"/>
</dbReference>
<dbReference type="CDD" id="cd01335">
    <property type="entry name" value="Radical_SAM"/>
    <property type="match status" value="1"/>
</dbReference>
<dbReference type="FunFam" id="3.20.20.70:FF:000014">
    <property type="entry name" value="Probable dual-specificity RNA methyltransferase RlmN"/>
    <property type="match status" value="1"/>
</dbReference>
<dbReference type="Gene3D" id="1.10.150.530">
    <property type="match status" value="1"/>
</dbReference>
<dbReference type="Gene3D" id="3.20.20.70">
    <property type="entry name" value="Aldolase class I"/>
    <property type="match status" value="1"/>
</dbReference>
<dbReference type="HAMAP" id="MF_01849">
    <property type="entry name" value="RNA_methyltr_RlmN"/>
    <property type="match status" value="1"/>
</dbReference>
<dbReference type="InterPro" id="IPR013785">
    <property type="entry name" value="Aldolase_TIM"/>
</dbReference>
<dbReference type="InterPro" id="IPR040072">
    <property type="entry name" value="Methyltransferase_A"/>
</dbReference>
<dbReference type="InterPro" id="IPR048641">
    <property type="entry name" value="RlmN_N"/>
</dbReference>
<dbReference type="InterPro" id="IPR027492">
    <property type="entry name" value="RNA_MTrfase_RlmN"/>
</dbReference>
<dbReference type="InterPro" id="IPR004383">
    <property type="entry name" value="rRNA_lsu_MTrfase_RlmN/Cfr"/>
</dbReference>
<dbReference type="InterPro" id="IPR007197">
    <property type="entry name" value="rSAM"/>
</dbReference>
<dbReference type="NCBIfam" id="TIGR00048">
    <property type="entry name" value="rRNA_mod_RlmN"/>
    <property type="match status" value="1"/>
</dbReference>
<dbReference type="PANTHER" id="PTHR30544">
    <property type="entry name" value="23S RRNA METHYLTRANSFERASE"/>
    <property type="match status" value="1"/>
</dbReference>
<dbReference type="PANTHER" id="PTHR30544:SF5">
    <property type="entry name" value="RADICAL SAM CORE DOMAIN-CONTAINING PROTEIN"/>
    <property type="match status" value="1"/>
</dbReference>
<dbReference type="Pfam" id="PF13353">
    <property type="entry name" value="Fer4_12"/>
    <property type="match status" value="1"/>
</dbReference>
<dbReference type="Pfam" id="PF04055">
    <property type="entry name" value="Radical_SAM"/>
    <property type="match status" value="1"/>
</dbReference>
<dbReference type="Pfam" id="PF21016">
    <property type="entry name" value="RlmN_N"/>
    <property type="match status" value="1"/>
</dbReference>
<dbReference type="PIRSF" id="PIRSF006004">
    <property type="entry name" value="CHP00048"/>
    <property type="match status" value="1"/>
</dbReference>
<dbReference type="SFLD" id="SFLDF00275">
    <property type="entry name" value="adenosine_C2_methyltransferase"/>
    <property type="match status" value="1"/>
</dbReference>
<dbReference type="SFLD" id="SFLDS00029">
    <property type="entry name" value="Radical_SAM"/>
    <property type="match status" value="1"/>
</dbReference>
<dbReference type="SUPFAM" id="SSF102114">
    <property type="entry name" value="Radical SAM enzymes"/>
    <property type="match status" value="1"/>
</dbReference>
<dbReference type="PROSITE" id="PS51918">
    <property type="entry name" value="RADICAL_SAM"/>
    <property type="match status" value="1"/>
</dbReference>